<name>EFTS_SHIB3</name>
<feature type="chain" id="PRO_1000189874" description="Elongation factor Ts">
    <location>
        <begin position="1"/>
        <end position="283"/>
    </location>
</feature>
<feature type="region of interest" description="Involved in Mg(2+) ion dislocation from EF-Tu" evidence="1">
    <location>
        <begin position="80"/>
        <end position="83"/>
    </location>
</feature>
<comment type="function">
    <text evidence="1">Associates with the EF-Tu.GDP complex and induces the exchange of GDP to GTP. It remains bound to the aminoacyl-tRNA.EF-Tu.GTP complex up to the GTP hydrolysis stage on the ribosome.</text>
</comment>
<comment type="subcellular location">
    <subcellularLocation>
        <location evidence="1">Cytoplasm</location>
    </subcellularLocation>
</comment>
<comment type="similarity">
    <text evidence="1">Belongs to the EF-Ts family.</text>
</comment>
<dbReference type="EMBL" id="CP001063">
    <property type="protein sequence ID" value="ACD07302.1"/>
    <property type="molecule type" value="Genomic_DNA"/>
</dbReference>
<dbReference type="RefSeq" id="WP_000818114.1">
    <property type="nucleotide sequence ID" value="NC_010658.1"/>
</dbReference>
<dbReference type="SMR" id="B2U313"/>
<dbReference type="STRING" id="344609.SbBS512_E0163"/>
<dbReference type="GeneID" id="93777255"/>
<dbReference type="KEGG" id="sbc:SbBS512_E0163"/>
<dbReference type="HOGENOM" id="CLU_047155_0_2_6"/>
<dbReference type="Proteomes" id="UP000001030">
    <property type="component" value="Chromosome"/>
</dbReference>
<dbReference type="GO" id="GO:0005737">
    <property type="term" value="C:cytoplasm"/>
    <property type="evidence" value="ECO:0007669"/>
    <property type="project" value="UniProtKB-SubCell"/>
</dbReference>
<dbReference type="GO" id="GO:0003746">
    <property type="term" value="F:translation elongation factor activity"/>
    <property type="evidence" value="ECO:0007669"/>
    <property type="project" value="UniProtKB-UniRule"/>
</dbReference>
<dbReference type="CDD" id="cd14275">
    <property type="entry name" value="UBA_EF-Ts"/>
    <property type="match status" value="1"/>
</dbReference>
<dbReference type="FunFam" id="1.10.286.20:FF:000001">
    <property type="entry name" value="Elongation factor Ts"/>
    <property type="match status" value="1"/>
</dbReference>
<dbReference type="FunFam" id="1.10.8.10:FF:000001">
    <property type="entry name" value="Elongation factor Ts"/>
    <property type="match status" value="1"/>
</dbReference>
<dbReference type="FunFam" id="3.30.479.20:FF:000001">
    <property type="entry name" value="Elongation factor Ts"/>
    <property type="match status" value="1"/>
</dbReference>
<dbReference type="Gene3D" id="1.10.286.20">
    <property type="match status" value="1"/>
</dbReference>
<dbReference type="Gene3D" id="1.10.8.10">
    <property type="entry name" value="DNA helicase RuvA subunit, C-terminal domain"/>
    <property type="match status" value="1"/>
</dbReference>
<dbReference type="Gene3D" id="3.30.479.20">
    <property type="entry name" value="Elongation factor Ts, dimerisation domain"/>
    <property type="match status" value="2"/>
</dbReference>
<dbReference type="HAMAP" id="MF_00050">
    <property type="entry name" value="EF_Ts"/>
    <property type="match status" value="1"/>
</dbReference>
<dbReference type="InterPro" id="IPR036402">
    <property type="entry name" value="EF-Ts_dimer_sf"/>
</dbReference>
<dbReference type="InterPro" id="IPR001816">
    <property type="entry name" value="Transl_elong_EFTs/EF1B"/>
</dbReference>
<dbReference type="InterPro" id="IPR014039">
    <property type="entry name" value="Transl_elong_EFTs/EF1B_dimer"/>
</dbReference>
<dbReference type="InterPro" id="IPR018101">
    <property type="entry name" value="Transl_elong_Ts_CS"/>
</dbReference>
<dbReference type="InterPro" id="IPR009060">
    <property type="entry name" value="UBA-like_sf"/>
</dbReference>
<dbReference type="NCBIfam" id="TIGR00116">
    <property type="entry name" value="tsf"/>
    <property type="match status" value="1"/>
</dbReference>
<dbReference type="PANTHER" id="PTHR11741">
    <property type="entry name" value="ELONGATION FACTOR TS"/>
    <property type="match status" value="1"/>
</dbReference>
<dbReference type="PANTHER" id="PTHR11741:SF0">
    <property type="entry name" value="ELONGATION FACTOR TS, MITOCHONDRIAL"/>
    <property type="match status" value="1"/>
</dbReference>
<dbReference type="Pfam" id="PF00889">
    <property type="entry name" value="EF_TS"/>
    <property type="match status" value="1"/>
</dbReference>
<dbReference type="SUPFAM" id="SSF54713">
    <property type="entry name" value="Elongation factor Ts (EF-Ts), dimerisation domain"/>
    <property type="match status" value="2"/>
</dbReference>
<dbReference type="SUPFAM" id="SSF46934">
    <property type="entry name" value="UBA-like"/>
    <property type="match status" value="1"/>
</dbReference>
<dbReference type="PROSITE" id="PS01126">
    <property type="entry name" value="EF_TS_1"/>
    <property type="match status" value="1"/>
</dbReference>
<dbReference type="PROSITE" id="PS01127">
    <property type="entry name" value="EF_TS_2"/>
    <property type="match status" value="1"/>
</dbReference>
<evidence type="ECO:0000255" key="1">
    <source>
        <dbReference type="HAMAP-Rule" id="MF_00050"/>
    </source>
</evidence>
<keyword id="KW-0963">Cytoplasm</keyword>
<keyword id="KW-0251">Elongation factor</keyword>
<keyword id="KW-0648">Protein biosynthesis</keyword>
<keyword id="KW-1185">Reference proteome</keyword>
<organism>
    <name type="scientific">Shigella boydii serotype 18 (strain CDC 3083-94 / BS512)</name>
    <dbReference type="NCBI Taxonomy" id="344609"/>
    <lineage>
        <taxon>Bacteria</taxon>
        <taxon>Pseudomonadati</taxon>
        <taxon>Pseudomonadota</taxon>
        <taxon>Gammaproteobacteria</taxon>
        <taxon>Enterobacterales</taxon>
        <taxon>Enterobacteriaceae</taxon>
        <taxon>Shigella</taxon>
    </lineage>
</organism>
<sequence>MAEITASLVKELRERTGAGMMDCKKALTEANGDIELAIENMRKSGAIKAAKKAGNVAADGVIKTKIDGNYGIILEVNCQTDFVAKDAGFQAFADKVLDAAVAGKITDVEVLKAQFEEERVALVAKIGENINIRRVAALEGDVLGSYQHGARIGVLVAAKGADEELVKHIAMHVAASKPEFIKPEDVSAEVVEKEYQVQLDIAMQSGKPKEIAEKMVEGRMKKFTGEVSLTGQPFVMEPSKTVGQLLKEHNAEVTGFIRFEVGEGIEKVETDFAAEVAAMSKQS</sequence>
<proteinExistence type="inferred from homology"/>
<protein>
    <recommendedName>
        <fullName evidence="1">Elongation factor Ts</fullName>
        <shortName evidence="1">EF-Ts</shortName>
    </recommendedName>
</protein>
<gene>
    <name evidence="1" type="primary">tsf</name>
    <name type="ordered locus">SbBS512_E0163</name>
</gene>
<accession>B2U313</accession>
<reference key="1">
    <citation type="submission" date="2008-05" db="EMBL/GenBank/DDBJ databases">
        <title>Complete sequence of Shigella boydii serotype 18 strain BS512.</title>
        <authorList>
            <person name="Rasko D.A."/>
            <person name="Rosovitz M."/>
            <person name="Maurelli A.T."/>
            <person name="Myers G."/>
            <person name="Seshadri R."/>
            <person name="Cer R."/>
            <person name="Jiang L."/>
            <person name="Ravel J."/>
            <person name="Sebastian Y."/>
        </authorList>
    </citation>
    <scope>NUCLEOTIDE SEQUENCE [LARGE SCALE GENOMIC DNA]</scope>
    <source>
        <strain>CDC 3083-94 / BS512</strain>
    </source>
</reference>